<accession>Q8WWN8</accession>
<accession>B4DIT1</accession>
<accession>D3DQE3</accession>
<proteinExistence type="evidence at protein level"/>
<keyword id="KW-0002">3D-structure</keyword>
<keyword id="KW-0025">Alternative splicing</keyword>
<keyword id="KW-1003">Cell membrane</keyword>
<keyword id="KW-0966">Cell projection</keyword>
<keyword id="KW-0963">Cytoplasm</keyword>
<keyword id="KW-0206">Cytoskeleton</keyword>
<keyword id="KW-0343">GTPase activation</keyword>
<keyword id="KW-0472">Membrane</keyword>
<keyword id="KW-0479">Metal-binding</keyword>
<keyword id="KW-0597">Phosphoprotein</keyword>
<keyword id="KW-1267">Proteomics identification</keyword>
<keyword id="KW-1185">Reference proteome</keyword>
<keyword id="KW-0677">Repeat</keyword>
<keyword id="KW-0862">Zinc</keyword>
<keyword id="KW-0863">Zinc-finger</keyword>
<reference key="1">
    <citation type="journal article" date="2002" name="Mol. Cell">
        <title>Identification of ARAP3, a novel PI3K effector regulating both Arf and Rho GTPases, by selective capture on phosphoinositide affinity matrices.</title>
        <authorList>
            <person name="Krugmann S."/>
            <person name="Anderson K.E."/>
            <person name="Ridley S.H."/>
            <person name="Risso N."/>
            <person name="McGregor A."/>
            <person name="Coadwell J."/>
            <person name="Davidson K."/>
            <person name="Eguinoa A."/>
            <person name="Ellson C.D."/>
            <person name="Lipp P."/>
            <person name="Manifava M."/>
            <person name="Ktistakis N."/>
            <person name="Painter G."/>
            <person name="Thuring J.W."/>
            <person name="Cooper M.A."/>
            <person name="Lim Z.-Y."/>
            <person name="Holmes A.B."/>
            <person name="Dove S.K."/>
            <person name="Michell R.H."/>
            <person name="Grewal A."/>
            <person name="Nazarian A."/>
            <person name="Erdjument-Bromage H."/>
            <person name="Tempst P."/>
            <person name="Stephens L.R."/>
            <person name="Hawkins P.T."/>
        </authorList>
    </citation>
    <scope>NUCLEOTIDE SEQUENCE [MRNA] (ISOFORM 1)</scope>
    <scope>MUTAGENESIS OF 307-ARG-ARG-308</scope>
    <scope>FUNCTION</scope>
    <scope>INTERACTION WITH PHOSPHATIDYLINOSITOL 3-PHOSPHATE</scope>
</reference>
<reference key="2">
    <citation type="journal article" date="2004" name="Nat. Genet.">
        <title>Complete sequencing and characterization of 21,243 full-length human cDNAs.</title>
        <authorList>
            <person name="Ota T."/>
            <person name="Suzuki Y."/>
            <person name="Nishikawa T."/>
            <person name="Otsuki T."/>
            <person name="Sugiyama T."/>
            <person name="Irie R."/>
            <person name="Wakamatsu A."/>
            <person name="Hayashi K."/>
            <person name="Sato H."/>
            <person name="Nagai K."/>
            <person name="Kimura K."/>
            <person name="Makita H."/>
            <person name="Sekine M."/>
            <person name="Obayashi M."/>
            <person name="Nishi T."/>
            <person name="Shibahara T."/>
            <person name="Tanaka T."/>
            <person name="Ishii S."/>
            <person name="Yamamoto J."/>
            <person name="Saito K."/>
            <person name="Kawai Y."/>
            <person name="Isono Y."/>
            <person name="Nakamura Y."/>
            <person name="Nagahari K."/>
            <person name="Murakami K."/>
            <person name="Yasuda T."/>
            <person name="Iwayanagi T."/>
            <person name="Wagatsuma M."/>
            <person name="Shiratori A."/>
            <person name="Sudo H."/>
            <person name="Hosoiri T."/>
            <person name="Kaku Y."/>
            <person name="Kodaira H."/>
            <person name="Kondo H."/>
            <person name="Sugawara M."/>
            <person name="Takahashi M."/>
            <person name="Kanda K."/>
            <person name="Yokoi T."/>
            <person name="Furuya T."/>
            <person name="Kikkawa E."/>
            <person name="Omura Y."/>
            <person name="Abe K."/>
            <person name="Kamihara K."/>
            <person name="Katsuta N."/>
            <person name="Sato K."/>
            <person name="Tanikawa M."/>
            <person name="Yamazaki M."/>
            <person name="Ninomiya K."/>
            <person name="Ishibashi T."/>
            <person name="Yamashita H."/>
            <person name="Murakawa K."/>
            <person name="Fujimori K."/>
            <person name="Tanai H."/>
            <person name="Kimata M."/>
            <person name="Watanabe M."/>
            <person name="Hiraoka S."/>
            <person name="Chiba Y."/>
            <person name="Ishida S."/>
            <person name="Ono Y."/>
            <person name="Takiguchi S."/>
            <person name="Watanabe S."/>
            <person name="Yosida M."/>
            <person name="Hotuta T."/>
            <person name="Kusano J."/>
            <person name="Kanehori K."/>
            <person name="Takahashi-Fujii A."/>
            <person name="Hara H."/>
            <person name="Tanase T.-O."/>
            <person name="Nomura Y."/>
            <person name="Togiya S."/>
            <person name="Komai F."/>
            <person name="Hara R."/>
            <person name="Takeuchi K."/>
            <person name="Arita M."/>
            <person name="Imose N."/>
            <person name="Musashino K."/>
            <person name="Yuuki H."/>
            <person name="Oshima A."/>
            <person name="Sasaki N."/>
            <person name="Aotsuka S."/>
            <person name="Yoshikawa Y."/>
            <person name="Matsunawa H."/>
            <person name="Ichihara T."/>
            <person name="Shiohata N."/>
            <person name="Sano S."/>
            <person name="Moriya S."/>
            <person name="Momiyama H."/>
            <person name="Satoh N."/>
            <person name="Takami S."/>
            <person name="Terashima Y."/>
            <person name="Suzuki O."/>
            <person name="Nakagawa S."/>
            <person name="Senoh A."/>
            <person name="Mizoguchi H."/>
            <person name="Goto Y."/>
            <person name="Shimizu F."/>
            <person name="Wakebe H."/>
            <person name="Hishigaki H."/>
            <person name="Watanabe T."/>
            <person name="Sugiyama A."/>
            <person name="Takemoto M."/>
            <person name="Kawakami B."/>
            <person name="Yamazaki M."/>
            <person name="Watanabe K."/>
            <person name="Kumagai A."/>
            <person name="Itakura S."/>
            <person name="Fukuzumi Y."/>
            <person name="Fujimori Y."/>
            <person name="Komiyama M."/>
            <person name="Tashiro H."/>
            <person name="Tanigami A."/>
            <person name="Fujiwara T."/>
            <person name="Ono T."/>
            <person name="Yamada K."/>
            <person name="Fujii Y."/>
            <person name="Ozaki K."/>
            <person name="Hirao M."/>
            <person name="Ohmori Y."/>
            <person name="Kawabata A."/>
            <person name="Hikiji T."/>
            <person name="Kobatake N."/>
            <person name="Inagaki H."/>
            <person name="Ikema Y."/>
            <person name="Okamoto S."/>
            <person name="Okitani R."/>
            <person name="Kawakami T."/>
            <person name="Noguchi S."/>
            <person name="Itoh T."/>
            <person name="Shigeta K."/>
            <person name="Senba T."/>
            <person name="Matsumura K."/>
            <person name="Nakajima Y."/>
            <person name="Mizuno T."/>
            <person name="Morinaga M."/>
            <person name="Sasaki M."/>
            <person name="Togashi T."/>
            <person name="Oyama M."/>
            <person name="Hata H."/>
            <person name="Watanabe M."/>
            <person name="Komatsu T."/>
            <person name="Mizushima-Sugano J."/>
            <person name="Satoh T."/>
            <person name="Shirai Y."/>
            <person name="Takahashi Y."/>
            <person name="Nakagawa K."/>
            <person name="Okumura K."/>
            <person name="Nagase T."/>
            <person name="Nomura N."/>
            <person name="Kikuchi H."/>
            <person name="Masuho Y."/>
            <person name="Yamashita R."/>
            <person name="Nakai K."/>
            <person name="Yada T."/>
            <person name="Nakamura Y."/>
            <person name="Ohara O."/>
            <person name="Isogai T."/>
            <person name="Sugano S."/>
        </authorList>
    </citation>
    <scope>NUCLEOTIDE SEQUENCE [LARGE SCALE MRNA] (ISOFORM 2)</scope>
    <source>
        <tissue>Hippocampus</tissue>
    </source>
</reference>
<reference key="3">
    <citation type="journal article" date="2004" name="Nature">
        <title>The DNA sequence and comparative analysis of human chromosome 5.</title>
        <authorList>
            <person name="Schmutz J."/>
            <person name="Martin J."/>
            <person name="Terry A."/>
            <person name="Couronne O."/>
            <person name="Grimwood J."/>
            <person name="Lowry S."/>
            <person name="Gordon L.A."/>
            <person name="Scott D."/>
            <person name="Xie G."/>
            <person name="Huang W."/>
            <person name="Hellsten U."/>
            <person name="Tran-Gyamfi M."/>
            <person name="She X."/>
            <person name="Prabhakar S."/>
            <person name="Aerts A."/>
            <person name="Altherr M."/>
            <person name="Bajorek E."/>
            <person name="Black S."/>
            <person name="Branscomb E."/>
            <person name="Caoile C."/>
            <person name="Challacombe J.F."/>
            <person name="Chan Y.M."/>
            <person name="Denys M."/>
            <person name="Detter J.C."/>
            <person name="Escobar J."/>
            <person name="Flowers D."/>
            <person name="Fotopulos D."/>
            <person name="Glavina T."/>
            <person name="Gomez M."/>
            <person name="Gonzales E."/>
            <person name="Goodstein D."/>
            <person name="Grigoriev I."/>
            <person name="Groza M."/>
            <person name="Hammon N."/>
            <person name="Hawkins T."/>
            <person name="Haydu L."/>
            <person name="Israni S."/>
            <person name="Jett J."/>
            <person name="Kadner K."/>
            <person name="Kimball H."/>
            <person name="Kobayashi A."/>
            <person name="Lopez F."/>
            <person name="Lou Y."/>
            <person name="Martinez D."/>
            <person name="Medina C."/>
            <person name="Morgan J."/>
            <person name="Nandkeshwar R."/>
            <person name="Noonan J.P."/>
            <person name="Pitluck S."/>
            <person name="Pollard M."/>
            <person name="Predki P."/>
            <person name="Priest J."/>
            <person name="Ramirez L."/>
            <person name="Retterer J."/>
            <person name="Rodriguez A."/>
            <person name="Rogers S."/>
            <person name="Salamov A."/>
            <person name="Salazar A."/>
            <person name="Thayer N."/>
            <person name="Tice H."/>
            <person name="Tsai M."/>
            <person name="Ustaszewska A."/>
            <person name="Vo N."/>
            <person name="Wheeler J."/>
            <person name="Wu K."/>
            <person name="Yang J."/>
            <person name="Dickson M."/>
            <person name="Cheng J.-F."/>
            <person name="Eichler E.E."/>
            <person name="Olsen A."/>
            <person name="Pennacchio L.A."/>
            <person name="Rokhsar D.S."/>
            <person name="Richardson P."/>
            <person name="Lucas S.M."/>
            <person name="Myers R.M."/>
            <person name="Rubin E.M."/>
        </authorList>
    </citation>
    <scope>NUCLEOTIDE SEQUENCE [LARGE SCALE GENOMIC DNA]</scope>
</reference>
<reference key="4">
    <citation type="submission" date="2005-09" db="EMBL/GenBank/DDBJ databases">
        <authorList>
            <person name="Mural R.J."/>
            <person name="Istrail S."/>
            <person name="Sutton G.G."/>
            <person name="Florea L."/>
            <person name="Halpern A.L."/>
            <person name="Mobarry C.M."/>
            <person name="Lippert R."/>
            <person name="Walenz B."/>
            <person name="Shatkay H."/>
            <person name="Dew I."/>
            <person name="Miller J.R."/>
            <person name="Flanigan M.J."/>
            <person name="Edwards N.J."/>
            <person name="Bolanos R."/>
            <person name="Fasulo D."/>
            <person name="Halldorsson B.V."/>
            <person name="Hannenhalli S."/>
            <person name="Turner R."/>
            <person name="Yooseph S."/>
            <person name="Lu F."/>
            <person name="Nusskern D.R."/>
            <person name="Shue B.C."/>
            <person name="Zheng X.H."/>
            <person name="Zhong F."/>
            <person name="Delcher A.L."/>
            <person name="Huson D.H."/>
            <person name="Kravitz S.A."/>
            <person name="Mouchard L."/>
            <person name="Reinert K."/>
            <person name="Remington K.A."/>
            <person name="Clark A.G."/>
            <person name="Waterman M.S."/>
            <person name="Eichler E.E."/>
            <person name="Adams M.D."/>
            <person name="Hunkapiller M.W."/>
            <person name="Myers E.W."/>
            <person name="Venter J.C."/>
        </authorList>
    </citation>
    <scope>NUCLEOTIDE SEQUENCE [LARGE SCALE GENOMIC DNA]</scope>
</reference>
<reference key="5">
    <citation type="journal article" date="2002" name="Curr. Biol.">
        <title>GTPase signaling: bridging the GAP between ARF and Rho.</title>
        <authorList>
            <person name="Santy L.C."/>
            <person name="Casanova J.E."/>
        </authorList>
    </citation>
    <scope>REVIEW</scope>
</reference>
<reference key="6">
    <citation type="journal article" date="2004" name="Proc. Natl. Acad. Sci. U.S.A.">
        <title>EST-based genome-wide gene inactivation identifies ARAP3 as a host protein affecting cellular susceptibility to anthrax toxin.</title>
        <authorList>
            <person name="Lu Q."/>
            <person name="Wei W."/>
            <person name="Kowalski P.E."/>
            <person name="Chang A.C.Y."/>
            <person name="Cohen S.N."/>
        </authorList>
    </citation>
    <scope>ROLE IN THE INTERNALIZATION OF ANTHRAX TOXIN</scope>
</reference>
<reference key="7">
    <citation type="journal article" date="2007" name="Cell. Signal.">
        <title>The PI3K effector Arap3 interacts with the PI(3,4,5)P3 phosphatase SHIP2 in a SAM domain-dependent manner.</title>
        <authorList>
            <person name="Raaijmakers J.H."/>
            <person name="Deneubourg L."/>
            <person name="Rehmann H."/>
            <person name="de Koning J."/>
            <person name="Zhang Z."/>
            <person name="Krugmann S."/>
            <person name="Erneux C."/>
            <person name="Bos J.L."/>
        </authorList>
    </citation>
    <scope>INTERACTION WITH INPPL1</scope>
</reference>
<reference key="8">
    <citation type="journal article" date="2008" name="Proc. Natl. Acad. Sci. U.S.A.">
        <title>A quantitative atlas of mitotic phosphorylation.</title>
        <authorList>
            <person name="Dephoure N."/>
            <person name="Zhou C."/>
            <person name="Villen J."/>
            <person name="Beausoleil S.A."/>
            <person name="Bakalarski C.E."/>
            <person name="Elledge S.J."/>
            <person name="Gygi S.P."/>
        </authorList>
    </citation>
    <scope>PHOSPHORYLATION [LARGE SCALE ANALYSIS] AT SER-1444</scope>
    <scope>IDENTIFICATION BY MASS SPECTROMETRY [LARGE SCALE ANALYSIS]</scope>
    <source>
        <tissue>Cervix carcinoma</tissue>
    </source>
</reference>
<reference key="9">
    <citation type="journal article" date="2011" name="Sci. Signal.">
        <title>System-wide temporal characterization of the proteome and phosphoproteome of human embryonic stem cell differentiation.</title>
        <authorList>
            <person name="Rigbolt K.T."/>
            <person name="Prokhorova T.A."/>
            <person name="Akimov V."/>
            <person name="Henningsen J."/>
            <person name="Johansen P.T."/>
            <person name="Kratchmarova I."/>
            <person name="Kassem M."/>
            <person name="Mann M."/>
            <person name="Olsen J.V."/>
            <person name="Blagoev B."/>
        </authorList>
    </citation>
    <scope>PHOSPHORYLATION [LARGE SCALE ANALYSIS] AT SER-1444 AND SER-1480</scope>
    <scope>IDENTIFICATION BY MASS SPECTROMETRY [LARGE SCALE ANALYSIS]</scope>
</reference>
<reference key="10">
    <citation type="journal article" date="2013" name="J. Proteome Res.">
        <title>Toward a comprehensive characterization of a human cancer cell phosphoproteome.</title>
        <authorList>
            <person name="Zhou H."/>
            <person name="Di Palma S."/>
            <person name="Preisinger C."/>
            <person name="Peng M."/>
            <person name="Polat A.N."/>
            <person name="Heck A.J."/>
            <person name="Mohammed S."/>
        </authorList>
    </citation>
    <scope>PHOSPHORYLATION [LARGE SCALE ANALYSIS] AT SER-1444</scope>
    <scope>IDENTIFICATION BY MASS SPECTROMETRY [LARGE SCALE ANALYSIS]</scope>
    <source>
        <tissue>Cervix carcinoma</tissue>
        <tissue>Erythroleukemia</tissue>
    </source>
</reference>
<reference key="11">
    <citation type="journal article" date="2009" name="BMC Struct. Biol.">
        <title>The Sam domain of the lipid phosphatase Ship2 adopts a common model to interact with Arap3-Sam and EphA2-Sam.</title>
        <authorList>
            <person name="Leone M."/>
            <person name="Cellitti J."/>
            <person name="Pellecchia M."/>
        </authorList>
    </citation>
    <scope>STRUCTURE BY NMR OF 1-80</scope>
    <scope>INTERACTION WITH INPPL1</scope>
</reference>
<reference key="12">
    <citation type="journal article" date="2006" name="Science">
        <title>The consensus coding sequences of human breast and colorectal cancers.</title>
        <authorList>
            <person name="Sjoeblom T."/>
            <person name="Jones S."/>
            <person name="Wood L.D."/>
            <person name="Parsons D.W."/>
            <person name="Lin J."/>
            <person name="Barber T.D."/>
            <person name="Mandelker D."/>
            <person name="Leary R.J."/>
            <person name="Ptak J."/>
            <person name="Silliman N."/>
            <person name="Szabo S."/>
            <person name="Buckhaults P."/>
            <person name="Farrell C."/>
            <person name="Meeh P."/>
            <person name="Markowitz S.D."/>
            <person name="Willis J."/>
            <person name="Dawson D."/>
            <person name="Willson J.K.V."/>
            <person name="Gazdar A.F."/>
            <person name="Hartigan J."/>
            <person name="Wu L."/>
            <person name="Liu C."/>
            <person name="Parmigiani G."/>
            <person name="Park B.H."/>
            <person name="Bachman K.E."/>
            <person name="Papadopoulos N."/>
            <person name="Vogelstein B."/>
            <person name="Kinzler K.W."/>
            <person name="Velculescu V.E."/>
        </authorList>
    </citation>
    <scope>VARIANTS [LARGE SCALE ANALYSIS] TRP-471; MET-1085 AND PRO-1428</scope>
</reference>
<feature type="chain" id="PRO_0000074215" description="Arf-GAP with Rho-GAP domain, ANK repeat and PH domain-containing protein 3">
    <location>
        <begin position="1"/>
        <end position="1544"/>
    </location>
</feature>
<feature type="domain" description="SAM" evidence="6">
    <location>
        <begin position="4"/>
        <end position="68"/>
    </location>
</feature>
<feature type="domain" description="PH 1" evidence="3">
    <location>
        <begin position="287"/>
        <end position="379"/>
    </location>
</feature>
<feature type="domain" description="PH 2" evidence="3">
    <location>
        <begin position="394"/>
        <end position="483"/>
    </location>
</feature>
<feature type="domain" description="Arf-GAP" evidence="7">
    <location>
        <begin position="480"/>
        <end position="611"/>
    </location>
</feature>
<feature type="domain" description="Rho-GAP" evidence="5">
    <location>
        <begin position="907"/>
        <end position="1088"/>
    </location>
</feature>
<feature type="domain" description="Ras-associating" evidence="4">
    <location>
        <begin position="1117"/>
        <end position="1210"/>
    </location>
</feature>
<feature type="domain" description="PH 3" evidence="3">
    <location>
        <begin position="1223"/>
        <end position="1325"/>
    </location>
</feature>
<feature type="zinc finger region" description="C4-type" evidence="7">
    <location>
        <begin position="504"/>
        <end position="527"/>
    </location>
</feature>
<feature type="region of interest" description="Disordered" evidence="8">
    <location>
        <begin position="64"/>
        <end position="147"/>
    </location>
</feature>
<feature type="region of interest" description="Disordered" evidence="8">
    <location>
        <begin position="167"/>
        <end position="194"/>
    </location>
</feature>
<feature type="region of interest" description="Disordered" evidence="8">
    <location>
        <begin position="1422"/>
        <end position="1544"/>
    </location>
</feature>
<feature type="compositionally biased region" description="Pro residues" evidence="8">
    <location>
        <begin position="82"/>
        <end position="97"/>
    </location>
</feature>
<feature type="compositionally biased region" description="Pro residues" evidence="8">
    <location>
        <begin position="130"/>
        <end position="139"/>
    </location>
</feature>
<feature type="compositionally biased region" description="Polar residues" evidence="8">
    <location>
        <begin position="1438"/>
        <end position="1457"/>
    </location>
</feature>
<feature type="compositionally biased region" description="Low complexity" evidence="8">
    <location>
        <begin position="1482"/>
        <end position="1492"/>
    </location>
</feature>
<feature type="compositionally biased region" description="Low complexity" evidence="8">
    <location>
        <begin position="1502"/>
        <end position="1527"/>
    </location>
</feature>
<feature type="site" description="Arginine finger; crucial for GTP hydrolysis by stabilizing the transition state" evidence="5">
    <location>
        <position position="942"/>
    </location>
</feature>
<feature type="modified residue" description="Phosphothreonine" evidence="2">
    <location>
        <position position="1348"/>
    </location>
</feature>
<feature type="modified residue" description="Phosphotyrosine" evidence="2">
    <location>
        <position position="1403"/>
    </location>
</feature>
<feature type="modified residue" description="Phosphotyrosine" evidence="2">
    <location>
        <position position="1408"/>
    </location>
</feature>
<feature type="modified residue" description="Phosphoserine" evidence="15 16 17">
    <location>
        <position position="1444"/>
    </location>
</feature>
<feature type="modified residue" description="Phosphoserine" evidence="16">
    <location>
        <position position="1480"/>
    </location>
</feature>
<feature type="splice variant" id="VSP_056214" description="In isoform 2." evidence="14">
    <location>
        <begin position="1"/>
        <end position="338"/>
    </location>
</feature>
<feature type="splice variant" id="VSP_056215" description="In isoform 2." evidence="14">
    <location>
        <begin position="1371"/>
        <end position="1383"/>
    </location>
</feature>
<feature type="sequence variant" id="VAR_048330" description="In dbSNP:rs1031904.">
    <original>D</original>
    <variation>H</variation>
    <location>
        <position position="218"/>
    </location>
</feature>
<feature type="sequence variant" id="VAR_036180" description="In a colorectal cancer sample; somatic mutation; dbSNP:rs1562420371." evidence="11">
    <original>R</original>
    <variation>W</variation>
    <location>
        <position position="471"/>
    </location>
</feature>
<feature type="sequence variant" id="VAR_036181" description="In a breast cancer sample; somatic mutation." evidence="11">
    <original>I</original>
    <variation>M</variation>
    <location>
        <position position="1085"/>
    </location>
</feature>
<feature type="sequence variant" id="VAR_036182" description="In a breast cancer sample; somatic mutation; dbSNP:rs61749636." evidence="11">
    <original>T</original>
    <variation>P</variation>
    <location>
        <position position="1428"/>
    </location>
</feature>
<feature type="mutagenesis site" description="Loss of PtdIns(3,4,5)P3 binding." evidence="9">
    <original>RR</original>
    <variation>AA</variation>
    <location>
        <begin position="307"/>
        <end position="308"/>
    </location>
</feature>
<feature type="helix" evidence="18">
    <location>
        <begin position="9"/>
        <end position="13"/>
    </location>
</feature>
<feature type="helix" evidence="18">
    <location>
        <begin position="14"/>
        <end position="16"/>
    </location>
</feature>
<feature type="helix" evidence="18">
    <location>
        <begin position="19"/>
        <end position="21"/>
    </location>
</feature>
<feature type="helix" evidence="18">
    <location>
        <begin position="22"/>
        <end position="27"/>
    </location>
</feature>
<feature type="helix" evidence="18">
    <location>
        <begin position="33"/>
        <end position="36"/>
    </location>
</feature>
<feature type="helix" evidence="18">
    <location>
        <begin position="41"/>
        <end position="47"/>
    </location>
</feature>
<feature type="helix" evidence="18">
    <location>
        <begin position="52"/>
        <end position="62"/>
    </location>
</feature>
<feature type="turn" evidence="18">
    <location>
        <begin position="63"/>
        <end position="67"/>
    </location>
</feature>
<feature type="strand" evidence="21">
    <location>
        <begin position="290"/>
        <end position="298"/>
    </location>
</feature>
<feature type="turn" evidence="21">
    <location>
        <begin position="299"/>
        <end position="302"/>
    </location>
</feature>
<feature type="strand" evidence="21">
    <location>
        <begin position="303"/>
        <end position="312"/>
    </location>
</feature>
<feature type="strand" evidence="21">
    <location>
        <begin position="314"/>
        <end position="321"/>
    </location>
</feature>
<feature type="strand" evidence="21">
    <location>
        <begin position="329"/>
        <end position="333"/>
    </location>
</feature>
<feature type="helix" evidence="21">
    <location>
        <begin position="334"/>
        <end position="336"/>
    </location>
</feature>
<feature type="strand" evidence="21">
    <location>
        <begin position="337"/>
        <end position="343"/>
    </location>
</feature>
<feature type="turn" evidence="21">
    <location>
        <begin position="344"/>
        <end position="346"/>
    </location>
</feature>
<feature type="strand" evidence="21">
    <location>
        <begin position="347"/>
        <end position="354"/>
    </location>
</feature>
<feature type="strand" evidence="21">
    <location>
        <begin position="356"/>
        <end position="360"/>
    </location>
</feature>
<feature type="helix" evidence="21">
    <location>
        <begin position="364"/>
        <end position="382"/>
    </location>
</feature>
<feature type="helix" evidence="19">
    <location>
        <begin position="909"/>
        <end position="911"/>
    </location>
</feature>
<feature type="strand" evidence="19">
    <location>
        <begin position="918"/>
        <end position="920"/>
    </location>
</feature>
<feature type="helix" evidence="19">
    <location>
        <begin position="921"/>
        <end position="933"/>
    </location>
</feature>
<feature type="turn" evidence="19">
    <location>
        <begin position="934"/>
        <end position="936"/>
    </location>
</feature>
<feature type="turn" evidence="19">
    <location>
        <begin position="938"/>
        <end position="942"/>
    </location>
</feature>
<feature type="helix" evidence="19">
    <location>
        <begin position="947"/>
        <end position="960"/>
    </location>
</feature>
<feature type="helix" evidence="19">
    <location>
        <begin position="961"/>
        <end position="963"/>
    </location>
</feature>
<feature type="turn" evidence="19">
    <location>
        <begin position="968"/>
        <end position="970"/>
    </location>
</feature>
<feature type="helix" evidence="19">
    <location>
        <begin position="973"/>
        <end position="986"/>
    </location>
</feature>
<feature type="strand" evidence="19">
    <location>
        <begin position="987"/>
        <end position="989"/>
    </location>
</feature>
<feature type="helix" evidence="19">
    <location>
        <begin position="994"/>
        <end position="996"/>
    </location>
</feature>
<feature type="helix" evidence="19">
    <location>
        <begin position="997"/>
        <end position="1004"/>
    </location>
</feature>
<feature type="helix" evidence="19">
    <location>
        <begin position="1009"/>
        <end position="1022"/>
    </location>
</feature>
<feature type="helix" evidence="19">
    <location>
        <begin position="1025"/>
        <end position="1043"/>
    </location>
</feature>
<feature type="helix" evidence="19">
    <location>
        <begin position="1045"/>
        <end position="1048"/>
    </location>
</feature>
<feature type="helix" evidence="19">
    <location>
        <begin position="1052"/>
        <end position="1064"/>
    </location>
</feature>
<feature type="helix" evidence="19">
    <location>
        <begin position="1071"/>
        <end position="1082"/>
    </location>
</feature>
<feature type="helix" evidence="19">
    <location>
        <begin position="1084"/>
        <end position="1087"/>
    </location>
</feature>
<feature type="helix" evidence="19">
    <location>
        <begin position="1092"/>
        <end position="1099"/>
    </location>
</feature>
<feature type="strand" evidence="20">
    <location>
        <begin position="1420"/>
        <end position="1424"/>
    </location>
</feature>
<protein>
    <recommendedName>
        <fullName>Arf-GAP with Rho-GAP domain, ANK repeat and PH domain-containing protein 3</fullName>
    </recommendedName>
    <alternativeName>
        <fullName>Centaurin-delta-3</fullName>
        <shortName>Cnt-d3</shortName>
    </alternativeName>
</protein>
<evidence type="ECO:0000250" key="1"/>
<evidence type="ECO:0000250" key="2">
    <source>
        <dbReference type="UniProtKB" id="Q8R5G7"/>
    </source>
</evidence>
<evidence type="ECO:0000255" key="3">
    <source>
        <dbReference type="PROSITE-ProRule" id="PRU00145"/>
    </source>
</evidence>
<evidence type="ECO:0000255" key="4">
    <source>
        <dbReference type="PROSITE-ProRule" id="PRU00166"/>
    </source>
</evidence>
<evidence type="ECO:0000255" key="5">
    <source>
        <dbReference type="PROSITE-ProRule" id="PRU00172"/>
    </source>
</evidence>
<evidence type="ECO:0000255" key="6">
    <source>
        <dbReference type="PROSITE-ProRule" id="PRU00184"/>
    </source>
</evidence>
<evidence type="ECO:0000255" key="7">
    <source>
        <dbReference type="PROSITE-ProRule" id="PRU00288"/>
    </source>
</evidence>
<evidence type="ECO:0000256" key="8">
    <source>
        <dbReference type="SAM" id="MobiDB-lite"/>
    </source>
</evidence>
<evidence type="ECO:0000269" key="9">
    <source>
    </source>
</evidence>
<evidence type="ECO:0000269" key="10">
    <source>
    </source>
</evidence>
<evidence type="ECO:0000269" key="11">
    <source>
    </source>
</evidence>
<evidence type="ECO:0000269" key="12">
    <source>
    </source>
</evidence>
<evidence type="ECO:0000269" key="13">
    <source>
    </source>
</evidence>
<evidence type="ECO:0000303" key="14">
    <source>
    </source>
</evidence>
<evidence type="ECO:0007744" key="15">
    <source>
    </source>
</evidence>
<evidence type="ECO:0007744" key="16">
    <source>
    </source>
</evidence>
<evidence type="ECO:0007744" key="17">
    <source>
    </source>
</evidence>
<evidence type="ECO:0007829" key="18">
    <source>
        <dbReference type="PDB" id="2KG5"/>
    </source>
</evidence>
<evidence type="ECO:0007829" key="19">
    <source>
        <dbReference type="PDB" id="5JCP"/>
    </source>
</evidence>
<evidence type="ECO:0007829" key="20">
    <source>
        <dbReference type="PDB" id="7A9B"/>
    </source>
</evidence>
<evidence type="ECO:0007829" key="21">
    <source>
        <dbReference type="PDB" id="7YIR"/>
    </source>
</evidence>
<sequence>MAAPQDLDIAVWLATVHLEQYADTFRRHGLATAGAARGLGHEELKQLGISATGHRKRILRLLQTGTEEGSLDPKSDSAMEPSPSPAPQAQPPKPVPKPRTVFGGLSGPATTQRPGLSPALGGPGVSRSPEPSPRPPPLPTSSSEQSSALNTVEMMPNSIYFGLDSRGRAQAAQDKAPDSSQISAPTPALRPTTGTVHIMDPGCLYYGVQPVGTPGAPDRRESRGVCQGRAEHRLSRQDLEAREDAGYASLELPGDSTLLSPTLETEETSDDLISPYASFSFTADRLTPLLSGWLDKLSPQGNYVFQRRFVQFNGRSLMYFGSDKDPFPKGVIPLTAIEMTRSSKDNKFQVITGQRVFVFRTESEAQRDMWCSTLQSCLKEQRLLGHPRPPQPPRPLRTGMLELRGHKAKVFAALSPGELALYKSEQAFSLGIGICFIELQGCSVRETKSRSFDLLTPHRCFSFTAESGGARQSWAAALQEAVTETLSDYEVAEKIWSNRANRQCADCGSSRPDWAAVNLGVVICKQCAGQHRALGSGISKVQSLKLDTSVWSNEIVQLFIVLGNDRANRFWAGTLPPGEGLHPDATPGPRGEFISRKYRLGLFRKPHPQYPDHSQLLQALCAAVARPNLLKNMTQLLCVEAFEGEEPWFPPAPDGSCPGLLPSDPSPGVYNEVVVRATYSGFLYCSPVSNKAGPSPPRRGRDAPPRLWCVLGAALEMFASENSPEPLSLIQPQDIVCLGVSPPPTDPGDRFPFSFELILAGGRIQHFGTDGADSLEAWTSAVGKWFSPLSCHQLLGPGLLRLGRLWLRSPSHTAPAPGLWLSGFGLLRGDHLFLCSAPGPGPPAPEDMVHLRRLQEISVVSAADTPDKKEHLVLVETGRTLYLQGEGRLDFTAWNAAIGGAAGGGGTGLQEQQMSRGDIPIIVDACISFVTQHGLRLEGVYRKGGARARSLRLLAEFRRDARSVKLRPGEHFVEDVTDTLKRFFRELDDPVTSARLLPRWREAAELPQKNQRLEKYKDVIGCLPRVNRRTLATLIGHLYRVQKCAALNQMCTRNLALLFAPSVFQTDGRGEHEVRVLQELIDGYISVFDIDSDQVAQIDLEVSLITTWKDVQLSQAGDLIMEVYIEQQLPDNCVTLKVSPTLTAEELTNQVLEMRGTAAGMDLWVTFEIREHGELERPLHPKEKVLEQALQWCQLPEPCSASLLLKKVPLAQAGCLFTGIRRESPRVGLLRCREEPPRLLGSRFQERFFLLRGRCLLLLKEKKSSKPEREWPLEGAKVYLGIRKKLKPPTPWGFTLILEKMHLYLSCTDEDEMWDWTTSILKAQHDDQQPVVLRRHSSSDLARQKFGTMPLLPIRGDDSGATLLSANQTLRRLHNRRTLSMFFPMKSSQGSVEEQEELEEPVYEEPVYEEVGAFPELIQDTSTSFSTTREWTVKPENPLTSQKSLDQPFLSKSSTLGQEERPPEPPPGPPSKSSPQARGSLEEQLLQELSSLILRKGETTAGLGSPSQPSSPQSPSPTGLPTQTPGFPTQPPCTSSPPSSQPLT</sequence>
<gene>
    <name type="primary">ARAP3</name>
    <name type="synonym">CENTD3</name>
</gene>
<name>ARAP3_HUMAN</name>
<dbReference type="EMBL" id="AJ310567">
    <property type="protein sequence ID" value="CAC83946.1"/>
    <property type="molecule type" value="mRNA"/>
</dbReference>
<dbReference type="EMBL" id="AK295768">
    <property type="protein sequence ID" value="BAG58593.1"/>
    <property type="molecule type" value="mRNA"/>
</dbReference>
<dbReference type="EMBL" id="AC022420">
    <property type="status" value="NOT_ANNOTATED_CDS"/>
    <property type="molecule type" value="Genomic_DNA"/>
</dbReference>
<dbReference type="EMBL" id="CH471062">
    <property type="protein sequence ID" value="EAW61904.1"/>
    <property type="molecule type" value="Genomic_DNA"/>
</dbReference>
<dbReference type="EMBL" id="CH471062">
    <property type="protein sequence ID" value="EAW61905.1"/>
    <property type="molecule type" value="Genomic_DNA"/>
</dbReference>
<dbReference type="CCDS" id="CCDS4266.1">
    <molecule id="Q8WWN8-1"/>
</dbReference>
<dbReference type="PIR" id="E59431">
    <property type="entry name" value="E59431"/>
</dbReference>
<dbReference type="RefSeq" id="NP_071926.4">
    <molecule id="Q8WWN8-1"/>
    <property type="nucleotide sequence ID" value="NM_022481.5"/>
</dbReference>
<dbReference type="RefSeq" id="XP_047273461.1">
    <molecule id="Q8WWN8-1"/>
    <property type="nucleotide sequence ID" value="XM_047417505.1"/>
</dbReference>
<dbReference type="PDB" id="2KG5">
    <property type="method" value="NMR"/>
    <property type="chains" value="A=1-80"/>
</dbReference>
<dbReference type="PDB" id="2LNW">
    <property type="method" value="NMR"/>
    <property type="chains" value="B=1404-1412"/>
</dbReference>
<dbReference type="PDB" id="5JCP">
    <property type="method" value="X-ray"/>
    <property type="resolution" value="2.10 A"/>
    <property type="chains" value="A/B=906-1107"/>
</dbReference>
<dbReference type="PDB" id="5JD0">
    <property type="method" value="X-ray"/>
    <property type="resolution" value="2.30 A"/>
    <property type="chains" value="A/B=906-1107"/>
</dbReference>
<dbReference type="PDB" id="7A9B">
    <property type="method" value="X-ray"/>
    <property type="resolution" value="2.00 A"/>
    <property type="chains" value="A/B=1414-1429"/>
</dbReference>
<dbReference type="PDB" id="7YIR">
    <property type="method" value="X-ray"/>
    <property type="resolution" value="2.10 A"/>
    <property type="chains" value="A=284-385"/>
</dbReference>
<dbReference type="PDB" id="7YIS">
    <property type="method" value="X-ray"/>
    <property type="resolution" value="3.30 A"/>
    <property type="chains" value="A=284-385"/>
</dbReference>
<dbReference type="PDBsum" id="2KG5"/>
<dbReference type="PDBsum" id="2LNW"/>
<dbReference type="PDBsum" id="5JCP"/>
<dbReference type="PDBsum" id="5JD0"/>
<dbReference type="PDBsum" id="7A9B"/>
<dbReference type="PDBsum" id="7YIR"/>
<dbReference type="PDBsum" id="7YIS"/>
<dbReference type="SMR" id="Q8WWN8"/>
<dbReference type="BioGRID" id="122163">
    <property type="interactions" value="96"/>
</dbReference>
<dbReference type="FunCoup" id="Q8WWN8">
    <property type="interactions" value="1278"/>
</dbReference>
<dbReference type="IntAct" id="Q8WWN8">
    <property type="interactions" value="42"/>
</dbReference>
<dbReference type="MINT" id="Q8WWN8"/>
<dbReference type="STRING" id="9606.ENSP00000239440"/>
<dbReference type="GlyGen" id="Q8WWN8">
    <property type="glycosylation" value="4 sites, 1 O-linked glycan (1 site)"/>
</dbReference>
<dbReference type="iPTMnet" id="Q8WWN8"/>
<dbReference type="PhosphoSitePlus" id="Q8WWN8"/>
<dbReference type="BioMuta" id="ARAP3"/>
<dbReference type="DMDM" id="73619965"/>
<dbReference type="jPOST" id="Q8WWN8"/>
<dbReference type="MassIVE" id="Q8WWN8"/>
<dbReference type="PaxDb" id="9606-ENSP00000239440"/>
<dbReference type="PeptideAtlas" id="Q8WWN8"/>
<dbReference type="ProteomicsDB" id="4328"/>
<dbReference type="ProteomicsDB" id="74915">
    <molecule id="Q8WWN8-1"/>
</dbReference>
<dbReference type="Pumba" id="Q8WWN8"/>
<dbReference type="Antibodypedia" id="27363">
    <property type="antibodies" value="117 antibodies from 29 providers"/>
</dbReference>
<dbReference type="DNASU" id="64411"/>
<dbReference type="Ensembl" id="ENST00000239440.9">
    <molecule id="Q8WWN8-1"/>
    <property type="protein sequence ID" value="ENSP00000239440.4"/>
    <property type="gene ID" value="ENSG00000120318.16"/>
</dbReference>
<dbReference type="Ensembl" id="ENST00000513878.5">
    <molecule id="Q8WWN8-2"/>
    <property type="protein sequence ID" value="ENSP00000421468.1"/>
    <property type="gene ID" value="ENSG00000120318.16"/>
</dbReference>
<dbReference type="GeneID" id="64411"/>
<dbReference type="KEGG" id="hsa:64411"/>
<dbReference type="MANE-Select" id="ENST00000239440.9">
    <property type="protein sequence ID" value="ENSP00000239440.4"/>
    <property type="RefSeq nucleotide sequence ID" value="NM_022481.6"/>
    <property type="RefSeq protein sequence ID" value="NP_071926.4"/>
</dbReference>
<dbReference type="UCSC" id="uc003llm.4">
    <molecule id="Q8WWN8-1"/>
    <property type="organism name" value="human"/>
</dbReference>
<dbReference type="AGR" id="HGNC:24097"/>
<dbReference type="CTD" id="64411"/>
<dbReference type="DisGeNET" id="64411"/>
<dbReference type="GeneCards" id="ARAP3"/>
<dbReference type="HGNC" id="HGNC:24097">
    <property type="gene designation" value="ARAP3"/>
</dbReference>
<dbReference type="HPA" id="ENSG00000120318">
    <property type="expression patterns" value="Low tissue specificity"/>
</dbReference>
<dbReference type="MalaCards" id="ARAP3"/>
<dbReference type="MIM" id="606647">
    <property type="type" value="gene"/>
</dbReference>
<dbReference type="neXtProt" id="NX_Q8WWN8"/>
<dbReference type="OpenTargets" id="ENSG00000120318"/>
<dbReference type="PharmGKB" id="PA164715983"/>
<dbReference type="VEuPathDB" id="HostDB:ENSG00000120318"/>
<dbReference type="eggNOG" id="KOG1117">
    <property type="taxonomic scope" value="Eukaryota"/>
</dbReference>
<dbReference type="GeneTree" id="ENSGT00940000158869"/>
<dbReference type="HOGENOM" id="CLU_002900_0_0_1"/>
<dbReference type="InParanoid" id="Q8WWN8"/>
<dbReference type="OMA" id="TLNTMEM"/>
<dbReference type="OrthoDB" id="29546at2759"/>
<dbReference type="PAN-GO" id="Q8WWN8">
    <property type="GO annotations" value="5 GO annotations based on evolutionary models"/>
</dbReference>
<dbReference type="PhylomeDB" id="Q8WWN8"/>
<dbReference type="TreeFam" id="TF105769"/>
<dbReference type="PathwayCommons" id="Q8WWN8"/>
<dbReference type="Reactome" id="R-HSA-8980692">
    <property type="pathway name" value="RHOA GTPase cycle"/>
</dbReference>
<dbReference type="Reactome" id="R-HSA-9013148">
    <property type="pathway name" value="CDC42 GTPase cycle"/>
</dbReference>
<dbReference type="Reactome" id="R-HSA-9013149">
    <property type="pathway name" value="RAC1 GTPase cycle"/>
</dbReference>
<dbReference type="Reactome" id="R-HSA-9013423">
    <property type="pathway name" value="RAC3 GTPase cycle"/>
</dbReference>
<dbReference type="SignaLink" id="Q8WWN8"/>
<dbReference type="SIGNOR" id="Q8WWN8"/>
<dbReference type="BioGRID-ORCS" id="64411">
    <property type="hits" value="15 hits in 1154 CRISPR screens"/>
</dbReference>
<dbReference type="ChiTaRS" id="ARAP3">
    <property type="organism name" value="human"/>
</dbReference>
<dbReference type="EvolutionaryTrace" id="Q8WWN8"/>
<dbReference type="GeneWiki" id="CENTD3"/>
<dbReference type="GenomeRNAi" id="64411"/>
<dbReference type="Pharos" id="Q8WWN8">
    <property type="development level" value="Tbio"/>
</dbReference>
<dbReference type="PRO" id="PR:Q8WWN8"/>
<dbReference type="Proteomes" id="UP000005640">
    <property type="component" value="Chromosome 5"/>
</dbReference>
<dbReference type="RNAct" id="Q8WWN8">
    <property type="molecule type" value="protein"/>
</dbReference>
<dbReference type="Bgee" id="ENSG00000120318">
    <property type="expression patterns" value="Expressed in apex of heart and 156 other cell types or tissues"/>
</dbReference>
<dbReference type="ExpressionAtlas" id="Q8WWN8">
    <property type="expression patterns" value="baseline and differential"/>
</dbReference>
<dbReference type="GO" id="GO:0005737">
    <property type="term" value="C:cytoplasm"/>
    <property type="evidence" value="ECO:0000318"/>
    <property type="project" value="GO_Central"/>
</dbReference>
<dbReference type="GO" id="GO:0005856">
    <property type="term" value="C:cytoskeleton"/>
    <property type="evidence" value="ECO:0007669"/>
    <property type="project" value="UniProtKB-SubCell"/>
</dbReference>
<dbReference type="GO" id="GO:0030027">
    <property type="term" value="C:lamellipodium"/>
    <property type="evidence" value="ECO:0007669"/>
    <property type="project" value="UniProtKB-SubCell"/>
</dbReference>
<dbReference type="GO" id="GO:0005886">
    <property type="term" value="C:plasma membrane"/>
    <property type="evidence" value="ECO:0007669"/>
    <property type="project" value="UniProtKB-SubCell"/>
</dbReference>
<dbReference type="GO" id="GO:0001726">
    <property type="term" value="C:ruffle"/>
    <property type="evidence" value="ECO:0007669"/>
    <property type="project" value="UniProtKB-SubCell"/>
</dbReference>
<dbReference type="GO" id="GO:0005547">
    <property type="term" value="F:phosphatidylinositol-3,4,5-trisphosphate binding"/>
    <property type="evidence" value="ECO:0000314"/>
    <property type="project" value="UniProtKB"/>
</dbReference>
<dbReference type="GO" id="GO:0043325">
    <property type="term" value="F:phosphatidylinositol-3,4-bisphosphate binding"/>
    <property type="evidence" value="ECO:0000314"/>
    <property type="project" value="UniProtKB"/>
</dbReference>
<dbReference type="GO" id="GO:0008270">
    <property type="term" value="F:zinc ion binding"/>
    <property type="evidence" value="ECO:0007669"/>
    <property type="project" value="UniProtKB-KW"/>
</dbReference>
<dbReference type="GO" id="GO:0007010">
    <property type="term" value="P:cytoskeleton organization"/>
    <property type="evidence" value="ECO:0000304"/>
    <property type="project" value="UniProtKB"/>
</dbReference>
<dbReference type="GO" id="GO:0032956">
    <property type="term" value="P:regulation of actin cytoskeleton organization"/>
    <property type="evidence" value="ECO:0000318"/>
    <property type="project" value="GO_Central"/>
</dbReference>
<dbReference type="GO" id="GO:0007165">
    <property type="term" value="P:signal transduction"/>
    <property type="evidence" value="ECO:0007669"/>
    <property type="project" value="InterPro"/>
</dbReference>
<dbReference type="GO" id="GO:0016192">
    <property type="term" value="P:vesicle-mediated transport"/>
    <property type="evidence" value="ECO:0000304"/>
    <property type="project" value="UniProtKB"/>
</dbReference>
<dbReference type="CDD" id="cd17902">
    <property type="entry name" value="ArfGap_ARAP3"/>
    <property type="match status" value="1"/>
</dbReference>
<dbReference type="CDD" id="cd13253">
    <property type="entry name" value="PH1_ARAP"/>
    <property type="match status" value="1"/>
</dbReference>
<dbReference type="CDD" id="cd13254">
    <property type="entry name" value="PH2_ARAP"/>
    <property type="match status" value="1"/>
</dbReference>
<dbReference type="CDD" id="cd13256">
    <property type="entry name" value="PH3_ARAP"/>
    <property type="match status" value="1"/>
</dbReference>
<dbReference type="CDD" id="cd13259">
    <property type="entry name" value="PH5_ARAP"/>
    <property type="match status" value="1"/>
</dbReference>
<dbReference type="CDD" id="cd04385">
    <property type="entry name" value="RhoGAP_ARAP"/>
    <property type="match status" value="1"/>
</dbReference>
<dbReference type="CDD" id="cd09490">
    <property type="entry name" value="SAM_Arap1_2_3"/>
    <property type="match status" value="1"/>
</dbReference>
<dbReference type="FunFam" id="2.30.29.30:FF:000128">
    <property type="entry name" value="arf-GAP with Rho-GAP domain, ANK repeat and PH domain-containing protein 2"/>
    <property type="match status" value="1"/>
</dbReference>
<dbReference type="FunFam" id="1.10.150.50:FF:000057">
    <property type="entry name" value="Arf-GAP with Rho-GAP domain, ANK repeat and PH domain-containing protein 3"/>
    <property type="match status" value="1"/>
</dbReference>
<dbReference type="FunFam" id="1.10.555.10:FF:000019">
    <property type="entry name" value="Arf-GAP with Rho-GAP domain, ANK repeat and PH domain-containing protein 3"/>
    <property type="match status" value="1"/>
</dbReference>
<dbReference type="FunFam" id="3.10.20.90:FF:000109">
    <property type="entry name" value="Arf-GAP with Rho-GAP domain, ANK repeat and PH domain-containing protein 3"/>
    <property type="match status" value="1"/>
</dbReference>
<dbReference type="FunFam" id="1.10.220.150:FF:000006">
    <property type="entry name" value="arf-GAP with Rho-GAP domain, ANK repeat and PH domain-containing protein 3"/>
    <property type="match status" value="1"/>
</dbReference>
<dbReference type="FunFam" id="2.30.29.30:FF:000193">
    <property type="entry name" value="arf-GAP with Rho-GAP domain, ANK repeat and PH domain-containing protein 3"/>
    <property type="match status" value="1"/>
</dbReference>
<dbReference type="FunFam" id="2.30.29.30:FF:000201">
    <property type="entry name" value="arf-GAP with Rho-GAP domain, ANK repeat and PH domain-containing protein 3"/>
    <property type="match status" value="1"/>
</dbReference>
<dbReference type="Gene3D" id="1.10.220.150">
    <property type="entry name" value="Arf GTPase activating protein"/>
    <property type="match status" value="1"/>
</dbReference>
<dbReference type="Gene3D" id="3.10.20.90">
    <property type="entry name" value="Phosphatidylinositol 3-kinase Catalytic Subunit, Chain A, domain 1"/>
    <property type="match status" value="1"/>
</dbReference>
<dbReference type="Gene3D" id="2.30.29.30">
    <property type="entry name" value="Pleckstrin-homology domain (PH domain)/Phosphotyrosine-binding domain (PTB)"/>
    <property type="match status" value="3"/>
</dbReference>
<dbReference type="Gene3D" id="1.10.555.10">
    <property type="entry name" value="Rho GTPase activation protein"/>
    <property type="match status" value="1"/>
</dbReference>
<dbReference type="Gene3D" id="1.10.150.50">
    <property type="entry name" value="Transcription Factor, Ets-1"/>
    <property type="match status" value="1"/>
</dbReference>
<dbReference type="InterPro" id="IPR052227">
    <property type="entry name" value="Arf-Rho-GAP_ANK-PH_domain"/>
</dbReference>
<dbReference type="InterPro" id="IPR037278">
    <property type="entry name" value="ARFGAP/RecO"/>
</dbReference>
<dbReference type="InterPro" id="IPR001164">
    <property type="entry name" value="ArfGAP_dom"/>
</dbReference>
<dbReference type="InterPro" id="IPR038508">
    <property type="entry name" value="ArfGAP_dom_sf"/>
</dbReference>
<dbReference type="InterPro" id="IPR011993">
    <property type="entry name" value="PH-like_dom_sf"/>
</dbReference>
<dbReference type="InterPro" id="IPR001849">
    <property type="entry name" value="PH_domain"/>
</dbReference>
<dbReference type="InterPro" id="IPR000159">
    <property type="entry name" value="RA_dom"/>
</dbReference>
<dbReference type="InterPro" id="IPR008936">
    <property type="entry name" value="Rho_GTPase_activation_prot"/>
</dbReference>
<dbReference type="InterPro" id="IPR037858">
    <property type="entry name" value="RhoGAP_ARAP"/>
</dbReference>
<dbReference type="InterPro" id="IPR000198">
    <property type="entry name" value="RhoGAP_dom"/>
</dbReference>
<dbReference type="InterPro" id="IPR001660">
    <property type="entry name" value="SAM"/>
</dbReference>
<dbReference type="InterPro" id="IPR013761">
    <property type="entry name" value="SAM/pointed_sf"/>
</dbReference>
<dbReference type="InterPro" id="IPR029071">
    <property type="entry name" value="Ubiquitin-like_domsf"/>
</dbReference>
<dbReference type="PANTHER" id="PTHR45899:SF4">
    <property type="entry name" value="ARF-GAP WITH RHO-GAP DOMAIN, ANK REPEAT AND PH DOMAIN-CONTAINING PROTEIN 3"/>
    <property type="match status" value="1"/>
</dbReference>
<dbReference type="PANTHER" id="PTHR45899">
    <property type="entry name" value="RHO GTPASE ACTIVATING PROTEIN AT 15B, ISOFORM C"/>
    <property type="match status" value="1"/>
</dbReference>
<dbReference type="Pfam" id="PF01412">
    <property type="entry name" value="ArfGap"/>
    <property type="match status" value="1"/>
</dbReference>
<dbReference type="Pfam" id="PF00169">
    <property type="entry name" value="PH"/>
    <property type="match status" value="2"/>
</dbReference>
<dbReference type="Pfam" id="PF00788">
    <property type="entry name" value="RA"/>
    <property type="match status" value="1"/>
</dbReference>
<dbReference type="Pfam" id="PF00620">
    <property type="entry name" value="RhoGAP"/>
    <property type="match status" value="1"/>
</dbReference>
<dbReference type="Pfam" id="PF07647">
    <property type="entry name" value="SAM_2"/>
    <property type="match status" value="1"/>
</dbReference>
<dbReference type="PRINTS" id="PR00405">
    <property type="entry name" value="REVINTRACTNG"/>
</dbReference>
<dbReference type="SMART" id="SM00105">
    <property type="entry name" value="ArfGap"/>
    <property type="match status" value="1"/>
</dbReference>
<dbReference type="SMART" id="SM00233">
    <property type="entry name" value="PH"/>
    <property type="match status" value="5"/>
</dbReference>
<dbReference type="SMART" id="SM00324">
    <property type="entry name" value="RhoGAP"/>
    <property type="match status" value="1"/>
</dbReference>
<dbReference type="SMART" id="SM00454">
    <property type="entry name" value="SAM"/>
    <property type="match status" value="1"/>
</dbReference>
<dbReference type="SUPFAM" id="SSF57863">
    <property type="entry name" value="ArfGap/RecO-like zinc finger"/>
    <property type="match status" value="1"/>
</dbReference>
<dbReference type="SUPFAM" id="SSF48350">
    <property type="entry name" value="GTPase activation domain, GAP"/>
    <property type="match status" value="1"/>
</dbReference>
<dbReference type="SUPFAM" id="SSF50729">
    <property type="entry name" value="PH domain-like"/>
    <property type="match status" value="5"/>
</dbReference>
<dbReference type="SUPFAM" id="SSF47769">
    <property type="entry name" value="SAM/Pointed domain"/>
    <property type="match status" value="1"/>
</dbReference>
<dbReference type="SUPFAM" id="SSF54236">
    <property type="entry name" value="Ubiquitin-like"/>
    <property type="match status" value="1"/>
</dbReference>
<dbReference type="PROSITE" id="PS50115">
    <property type="entry name" value="ARFGAP"/>
    <property type="match status" value="1"/>
</dbReference>
<dbReference type="PROSITE" id="PS50003">
    <property type="entry name" value="PH_DOMAIN"/>
    <property type="match status" value="3"/>
</dbReference>
<dbReference type="PROSITE" id="PS50200">
    <property type="entry name" value="RA"/>
    <property type="match status" value="1"/>
</dbReference>
<dbReference type="PROSITE" id="PS50238">
    <property type="entry name" value="RHOGAP"/>
    <property type="match status" value="1"/>
</dbReference>
<dbReference type="PROSITE" id="PS50105">
    <property type="entry name" value="SAM_DOMAIN"/>
    <property type="match status" value="1"/>
</dbReference>
<organism>
    <name type="scientific">Homo sapiens</name>
    <name type="common">Human</name>
    <dbReference type="NCBI Taxonomy" id="9606"/>
    <lineage>
        <taxon>Eukaryota</taxon>
        <taxon>Metazoa</taxon>
        <taxon>Chordata</taxon>
        <taxon>Craniata</taxon>
        <taxon>Vertebrata</taxon>
        <taxon>Euteleostomi</taxon>
        <taxon>Mammalia</taxon>
        <taxon>Eutheria</taxon>
        <taxon>Euarchontoglires</taxon>
        <taxon>Primates</taxon>
        <taxon>Haplorrhini</taxon>
        <taxon>Catarrhini</taxon>
        <taxon>Hominidae</taxon>
        <taxon>Homo</taxon>
    </lineage>
</organism>
<comment type="function">
    <text evidence="9 10">Phosphatidylinositol 3,4,5-trisphosphate-dependent GTPase-activating protein that modulates actin cytoskeleton remodeling by regulating ARF and RHO family members. Is activated by phosphatidylinositol 3,4,5-trisphosphate (PtdIns(3,4,5)P3) binding. Can be activated by phosphatidylinositol 3,4-bisphosphate (PtdIns(3,4,5)P2) binding, albeit with lower efficiency. Acts on ARF6, RAC1, RHOA and CDC42. Plays a role in the internalization of anthrax toxin.</text>
</comment>
<comment type="subunit">
    <text evidence="9 12 13">Interacts (via SAM domain) with INPPL1/SHIP2.</text>
</comment>
<comment type="interaction">
    <interactant intactId="EBI-4402732">
        <id>Q8WWN8</id>
    </interactant>
    <interactant intactId="EBI-346595">
        <id>Q96B97</id>
        <label>SH3KBP1</label>
    </interactant>
    <organismsDiffer>false</organismsDiffer>
    <experiments>4</experiments>
</comment>
<comment type="subcellular location">
    <subcellularLocation>
        <location evidence="1">Cytoplasm</location>
    </subcellularLocation>
    <subcellularLocation>
        <location evidence="1">Cytoplasm</location>
        <location evidence="1">Cytoskeleton</location>
    </subcellularLocation>
    <subcellularLocation>
        <location evidence="1">Cell membrane</location>
        <topology evidence="1">Peripheral membrane protein</topology>
    </subcellularLocation>
    <subcellularLocation>
        <location evidence="1">Cell projection</location>
        <location evidence="1">Lamellipodium</location>
    </subcellularLocation>
    <subcellularLocation>
        <location evidence="1">Cell projection</location>
        <location evidence="1">Ruffle</location>
    </subcellularLocation>
    <text evidence="1">Cytoplasmic, and associated with F-actin-rich membrane ruffles and lamellipodia.</text>
</comment>
<comment type="alternative products">
    <event type="alternative splicing"/>
    <isoform>
        <id>Q8WWN8-1</id>
        <name>1</name>
        <sequence type="displayed"/>
    </isoform>
    <isoform>
        <id>Q8WWN8-2</id>
        <name>2</name>
        <sequence type="described" ref="VSP_056214 VSP_056215"/>
    </isoform>
</comment>
<comment type="PTM">
    <text evidence="1">Tyrosine phosphorylated at a low basal level. PDGF treatment stimulates phosphorylation. Tyrosine phosphorylation is increased in cells that are in the process of becoming attached to a substrate and that start spreading and flattening (By similarity).</text>
</comment>